<comment type="function">
    <text evidence="1">During stationary phase, converts 70S ribosomes to an inactive dimeric form (100S ribosomes).</text>
</comment>
<comment type="subcellular location">
    <subcellularLocation>
        <location evidence="1">Cytoplasm</location>
    </subcellularLocation>
</comment>
<comment type="similarity">
    <text evidence="1">Belongs to the ribosome modulation factor family.</text>
</comment>
<comment type="sequence caution" evidence="3">
    <conflict type="erroneous initiation">
        <sequence resource="EMBL-CDS" id="ACQ61049"/>
    </conflict>
    <text>Extended N-terminus.</text>
</comment>
<keyword id="KW-0963">Cytoplasm</keyword>
<keyword id="KW-0810">Translation regulation</keyword>
<sequence>MKRQKRDRLERAQSQGYKAGLNGRSHDECPYQQTEVRSYWLGGWRDARNDKLSGLCK</sequence>
<protein>
    <recommendedName>
        <fullName evidence="1">Ribosome modulation factor</fullName>
        <shortName evidence="1">RMF</shortName>
    </recommendedName>
</protein>
<feature type="chain" id="PRO_0000416484" description="Ribosome modulation factor">
    <location>
        <begin position="1"/>
        <end position="57"/>
    </location>
</feature>
<feature type="region of interest" description="Disordered" evidence="2">
    <location>
        <begin position="1"/>
        <end position="28"/>
    </location>
</feature>
<dbReference type="EMBL" id="CP001485">
    <property type="protein sequence ID" value="ACQ61049.1"/>
    <property type="status" value="ALT_INIT"/>
    <property type="molecule type" value="Genomic_DNA"/>
</dbReference>
<dbReference type="RefSeq" id="WP_001881287.1">
    <property type="nucleotide sequence ID" value="NC_012668.1"/>
</dbReference>
<dbReference type="SMR" id="C3NQJ0"/>
<dbReference type="GeneID" id="94013800"/>
<dbReference type="KEGG" id="vcj:VCD_002889"/>
<dbReference type="HOGENOM" id="CLU_203350_0_0_6"/>
<dbReference type="GO" id="GO:0005737">
    <property type="term" value="C:cytoplasm"/>
    <property type="evidence" value="ECO:0007669"/>
    <property type="project" value="UniProtKB-SubCell"/>
</dbReference>
<dbReference type="GO" id="GO:0006417">
    <property type="term" value="P:regulation of translation"/>
    <property type="evidence" value="ECO:0007669"/>
    <property type="project" value="UniProtKB-UniRule"/>
</dbReference>
<dbReference type="Gene3D" id="1.10.10.620">
    <property type="entry name" value="ribosome modulation factor like domain"/>
    <property type="match status" value="1"/>
</dbReference>
<dbReference type="HAMAP" id="MF_00919">
    <property type="entry name" value="RMF"/>
    <property type="match status" value="1"/>
</dbReference>
<dbReference type="InterPro" id="IPR007040">
    <property type="entry name" value="Ribosome_modulation_factor"/>
</dbReference>
<dbReference type="InterPro" id="IPR023200">
    <property type="entry name" value="RMF_sf"/>
</dbReference>
<dbReference type="NCBIfam" id="NF011162">
    <property type="entry name" value="PRK14563.1"/>
    <property type="match status" value="1"/>
</dbReference>
<dbReference type="NCBIfam" id="NF041886">
    <property type="entry name" value="Rmf_CrpP_fam"/>
    <property type="match status" value="1"/>
</dbReference>
<dbReference type="Pfam" id="PF04957">
    <property type="entry name" value="RMF"/>
    <property type="match status" value="1"/>
</dbReference>
<reference key="1">
    <citation type="journal article" date="2009" name="Proc. Natl. Acad. Sci. U.S.A.">
        <title>Comparative genomics reveals mechanism for short-term and long-term clonal transitions in pandemic Vibrio cholerae.</title>
        <authorList>
            <person name="Chun J."/>
            <person name="Grim C.J."/>
            <person name="Hasan N.A."/>
            <person name="Lee J.H."/>
            <person name="Choi S.Y."/>
            <person name="Haley B.J."/>
            <person name="Taviani E."/>
            <person name="Jeon Y.-S."/>
            <person name="Kim D.W."/>
            <person name="Lee J.-H."/>
            <person name="Brettin T.S."/>
            <person name="Bruce D.C."/>
            <person name="Challacombe J.F."/>
            <person name="Detter J.C."/>
            <person name="Han C.S."/>
            <person name="Munk A.C."/>
            <person name="Chertkov O."/>
            <person name="Meincke L."/>
            <person name="Saunders E."/>
            <person name="Walters R.A."/>
            <person name="Huq A."/>
            <person name="Nair G.B."/>
            <person name="Colwell R.R."/>
        </authorList>
    </citation>
    <scope>NUCLEOTIDE SEQUENCE [LARGE SCALE GENOMIC DNA]</scope>
    <source>
        <strain>MJ-1236</strain>
    </source>
</reference>
<accession>C3NQJ0</accession>
<evidence type="ECO:0000255" key="1">
    <source>
        <dbReference type="HAMAP-Rule" id="MF_00919"/>
    </source>
</evidence>
<evidence type="ECO:0000256" key="2">
    <source>
        <dbReference type="SAM" id="MobiDB-lite"/>
    </source>
</evidence>
<evidence type="ECO:0000305" key="3"/>
<proteinExistence type="inferred from homology"/>
<gene>
    <name evidence="1" type="primary">rmf</name>
    <name type="ordered locus">VCD_002889</name>
</gene>
<organism>
    <name type="scientific">Vibrio cholerae serotype O1 (strain MJ-1236)</name>
    <dbReference type="NCBI Taxonomy" id="593588"/>
    <lineage>
        <taxon>Bacteria</taxon>
        <taxon>Pseudomonadati</taxon>
        <taxon>Pseudomonadota</taxon>
        <taxon>Gammaproteobacteria</taxon>
        <taxon>Vibrionales</taxon>
        <taxon>Vibrionaceae</taxon>
        <taxon>Vibrio</taxon>
    </lineage>
</organism>
<name>RMF_VIBCJ</name>